<evidence type="ECO:0000250" key="1"/>
<evidence type="ECO:0000255" key="2">
    <source>
        <dbReference type="PROSITE-ProRule" id="PRU00227"/>
    </source>
</evidence>
<feature type="chain" id="PRO_0000416668" description="Probable transcriptional repressor C1348.12">
    <location>
        <begin position="1"/>
        <end position="383"/>
    </location>
</feature>
<feature type="DNA-binding region" description="Zn(2)-C6 fungal-type" evidence="2">
    <location>
        <begin position="34"/>
        <end position="60"/>
    </location>
</feature>
<reference key="1">
    <citation type="journal article" date="2002" name="Nature">
        <title>The genome sequence of Schizosaccharomyces pombe.</title>
        <authorList>
            <person name="Wood V."/>
            <person name="Gwilliam R."/>
            <person name="Rajandream M.A."/>
            <person name="Lyne M.H."/>
            <person name="Lyne R."/>
            <person name="Stewart A."/>
            <person name="Sgouros J.G."/>
            <person name="Peat N."/>
            <person name="Hayles J."/>
            <person name="Baker S.G."/>
            <person name="Basham D."/>
            <person name="Bowman S."/>
            <person name="Brooks K."/>
            <person name="Brown D."/>
            <person name="Brown S."/>
            <person name="Chillingworth T."/>
            <person name="Churcher C.M."/>
            <person name="Collins M."/>
            <person name="Connor R."/>
            <person name="Cronin A."/>
            <person name="Davis P."/>
            <person name="Feltwell T."/>
            <person name="Fraser A."/>
            <person name="Gentles S."/>
            <person name="Goble A."/>
            <person name="Hamlin N."/>
            <person name="Harris D.E."/>
            <person name="Hidalgo J."/>
            <person name="Hodgson G."/>
            <person name="Holroyd S."/>
            <person name="Hornsby T."/>
            <person name="Howarth S."/>
            <person name="Huckle E.J."/>
            <person name="Hunt S."/>
            <person name="Jagels K."/>
            <person name="James K.D."/>
            <person name="Jones L."/>
            <person name="Jones M."/>
            <person name="Leather S."/>
            <person name="McDonald S."/>
            <person name="McLean J."/>
            <person name="Mooney P."/>
            <person name="Moule S."/>
            <person name="Mungall K.L."/>
            <person name="Murphy L.D."/>
            <person name="Niblett D."/>
            <person name="Odell C."/>
            <person name="Oliver K."/>
            <person name="O'Neil S."/>
            <person name="Pearson D."/>
            <person name="Quail M.A."/>
            <person name="Rabbinowitsch E."/>
            <person name="Rutherford K.M."/>
            <person name="Rutter S."/>
            <person name="Saunders D."/>
            <person name="Seeger K."/>
            <person name="Sharp S."/>
            <person name="Skelton J."/>
            <person name="Simmonds M.N."/>
            <person name="Squares R."/>
            <person name="Squares S."/>
            <person name="Stevens K."/>
            <person name="Taylor K."/>
            <person name="Taylor R.G."/>
            <person name="Tivey A."/>
            <person name="Walsh S.V."/>
            <person name="Warren T."/>
            <person name="Whitehead S."/>
            <person name="Woodward J.R."/>
            <person name="Volckaert G."/>
            <person name="Aert R."/>
            <person name="Robben J."/>
            <person name="Grymonprez B."/>
            <person name="Weltjens I."/>
            <person name="Vanstreels E."/>
            <person name="Rieger M."/>
            <person name="Schaefer M."/>
            <person name="Mueller-Auer S."/>
            <person name="Gabel C."/>
            <person name="Fuchs M."/>
            <person name="Duesterhoeft A."/>
            <person name="Fritzc C."/>
            <person name="Holzer E."/>
            <person name="Moestl D."/>
            <person name="Hilbert H."/>
            <person name="Borzym K."/>
            <person name="Langer I."/>
            <person name="Beck A."/>
            <person name="Lehrach H."/>
            <person name="Reinhardt R."/>
            <person name="Pohl T.M."/>
            <person name="Eger P."/>
            <person name="Zimmermann W."/>
            <person name="Wedler H."/>
            <person name="Wambutt R."/>
            <person name="Purnelle B."/>
            <person name="Goffeau A."/>
            <person name="Cadieu E."/>
            <person name="Dreano S."/>
            <person name="Gloux S."/>
            <person name="Lelaure V."/>
            <person name="Mottier S."/>
            <person name="Galibert F."/>
            <person name="Aves S.J."/>
            <person name="Xiang Z."/>
            <person name="Hunt C."/>
            <person name="Moore K."/>
            <person name="Hurst S.M."/>
            <person name="Lucas M."/>
            <person name="Rochet M."/>
            <person name="Gaillardin C."/>
            <person name="Tallada V.A."/>
            <person name="Garzon A."/>
            <person name="Thode G."/>
            <person name="Daga R.R."/>
            <person name="Cruzado L."/>
            <person name="Jimenez J."/>
            <person name="Sanchez M."/>
            <person name="del Rey F."/>
            <person name="Benito J."/>
            <person name="Dominguez A."/>
            <person name="Revuelta J.L."/>
            <person name="Moreno S."/>
            <person name="Armstrong J."/>
            <person name="Forsburg S.L."/>
            <person name="Cerutti L."/>
            <person name="Lowe T."/>
            <person name="McCombie W.R."/>
            <person name="Paulsen I."/>
            <person name="Potashkin J."/>
            <person name="Shpakovski G.V."/>
            <person name="Ussery D."/>
            <person name="Barrell B.G."/>
            <person name="Nurse P."/>
        </authorList>
    </citation>
    <scope>NUCLEOTIDE SEQUENCE [LARGE SCALE GENOMIC DNA]</scope>
    <source>
        <strain>972 / ATCC 24843</strain>
    </source>
</reference>
<reference key="2">
    <citation type="journal article" date="2011" name="Science">
        <title>Comparative functional genomics of the fission yeasts.</title>
        <authorList>
            <person name="Rhind N."/>
            <person name="Chen Z."/>
            <person name="Yassour M."/>
            <person name="Thompson D.A."/>
            <person name="Haas B.J."/>
            <person name="Habib N."/>
            <person name="Wapinski I."/>
            <person name="Roy S."/>
            <person name="Lin M.F."/>
            <person name="Heiman D.I."/>
            <person name="Young S.K."/>
            <person name="Furuya K."/>
            <person name="Guo Y."/>
            <person name="Pidoux A."/>
            <person name="Chen H.M."/>
            <person name="Robbertse B."/>
            <person name="Goldberg J.M."/>
            <person name="Aoki K."/>
            <person name="Bayne E.H."/>
            <person name="Berlin A.M."/>
            <person name="Desjardins C.A."/>
            <person name="Dobbs E."/>
            <person name="Dukaj L."/>
            <person name="Fan L."/>
            <person name="FitzGerald M.G."/>
            <person name="French C."/>
            <person name="Gujja S."/>
            <person name="Hansen K."/>
            <person name="Keifenheim D."/>
            <person name="Levin J.Z."/>
            <person name="Mosher R.A."/>
            <person name="Mueller C.A."/>
            <person name="Pfiffner J."/>
            <person name="Priest M."/>
            <person name="Russ C."/>
            <person name="Smialowska A."/>
            <person name="Swoboda P."/>
            <person name="Sykes S.M."/>
            <person name="Vaughn M."/>
            <person name="Vengrova S."/>
            <person name="Yoder R."/>
            <person name="Zeng Q."/>
            <person name="Allshire R."/>
            <person name="Baulcombe D."/>
            <person name="Birren B.W."/>
            <person name="Brown W."/>
            <person name="Ekwall K."/>
            <person name="Kellis M."/>
            <person name="Leatherwood J."/>
            <person name="Levin H."/>
            <person name="Margalit H."/>
            <person name="Martienssen R."/>
            <person name="Nieduszynski C.A."/>
            <person name="Spatafora J.W."/>
            <person name="Friedman N."/>
            <person name="Dalgaard J.Z."/>
            <person name="Baumann P."/>
            <person name="Niki H."/>
            <person name="Regev A."/>
            <person name="Nusbaum C."/>
        </authorList>
    </citation>
    <scope>REVISION OF GENE MODEL</scope>
</reference>
<dbReference type="EMBL" id="CU329671">
    <property type="protein sequence ID" value="CAO77654.2"/>
    <property type="molecule type" value="Genomic_DNA"/>
</dbReference>
<dbReference type="RefSeq" id="XP_004001692.1">
    <property type="nucleotide sequence ID" value="XM_004001643.1"/>
</dbReference>
<dbReference type="SMR" id="G2TRT1"/>
<dbReference type="BioGRID" id="280241">
    <property type="interactions" value="9"/>
</dbReference>
<dbReference type="FunCoup" id="G2TRT1">
    <property type="interactions" value="15"/>
</dbReference>
<dbReference type="STRING" id="284812.G2TRT1"/>
<dbReference type="PaxDb" id="4896-SPBC1348.12.1"/>
<dbReference type="EnsemblFungi" id="SPBC1348.12.1">
    <property type="protein sequence ID" value="SPBC1348.12.1:pep"/>
    <property type="gene ID" value="SPBC1348.12"/>
</dbReference>
<dbReference type="PomBase" id="SPBC1348.12"/>
<dbReference type="VEuPathDB" id="FungiDB:SPBC1348.12"/>
<dbReference type="HOGENOM" id="CLU_721913_0_0_1"/>
<dbReference type="InParanoid" id="G2TRT1"/>
<dbReference type="PRO" id="PR:G2TRT1"/>
<dbReference type="Proteomes" id="UP000002485">
    <property type="component" value="Chromosome II"/>
</dbReference>
<dbReference type="GO" id="GO:0005634">
    <property type="term" value="C:nucleus"/>
    <property type="evidence" value="ECO:0000305"/>
    <property type="project" value="PomBase"/>
</dbReference>
<dbReference type="GO" id="GO:0000981">
    <property type="term" value="F:DNA-binding transcription factor activity, RNA polymerase II-specific"/>
    <property type="evidence" value="ECO:0000255"/>
    <property type="project" value="PomBase"/>
</dbReference>
<dbReference type="GO" id="GO:0000978">
    <property type="term" value="F:RNA polymerase II cis-regulatory region sequence-specific DNA binding"/>
    <property type="evidence" value="ECO:0000255"/>
    <property type="project" value="PomBase"/>
</dbReference>
<dbReference type="GO" id="GO:0008270">
    <property type="term" value="F:zinc ion binding"/>
    <property type="evidence" value="ECO:0007669"/>
    <property type="project" value="InterPro"/>
</dbReference>
<dbReference type="GO" id="GO:0045944">
    <property type="term" value="P:positive regulation of transcription by RNA polymerase II"/>
    <property type="evidence" value="ECO:0000255"/>
    <property type="project" value="PomBase"/>
</dbReference>
<dbReference type="CDD" id="cd12148">
    <property type="entry name" value="fungal_TF_MHR"/>
    <property type="match status" value="1"/>
</dbReference>
<dbReference type="CDD" id="cd00067">
    <property type="entry name" value="GAL4"/>
    <property type="match status" value="1"/>
</dbReference>
<dbReference type="Gene3D" id="4.10.240.10">
    <property type="entry name" value="Zn(2)-C6 fungal-type DNA-binding domain"/>
    <property type="match status" value="1"/>
</dbReference>
<dbReference type="InterPro" id="IPR052478">
    <property type="entry name" value="Metabolite_Synth_Reg"/>
</dbReference>
<dbReference type="InterPro" id="IPR036864">
    <property type="entry name" value="Zn2-C6_fun-type_DNA-bd_sf"/>
</dbReference>
<dbReference type="InterPro" id="IPR001138">
    <property type="entry name" value="Zn2Cys6_DnaBD"/>
</dbReference>
<dbReference type="PANTHER" id="PTHR31779">
    <property type="entry name" value="2-NITROPROPANE DIOXYGENASE FAMILY, PUTATIVE (AFU_ORTHOLOGUE AFUA_2G17430)-RELATED"/>
    <property type="match status" value="1"/>
</dbReference>
<dbReference type="PANTHER" id="PTHR31779:SF6">
    <property type="entry name" value="SNOAL-LIKE DOMAIN-CONTAINING PROTEIN"/>
    <property type="match status" value="1"/>
</dbReference>
<dbReference type="Pfam" id="PF00172">
    <property type="entry name" value="Zn_clus"/>
    <property type="match status" value="1"/>
</dbReference>
<dbReference type="SMART" id="SM00066">
    <property type="entry name" value="GAL4"/>
    <property type="match status" value="1"/>
</dbReference>
<dbReference type="SUPFAM" id="SSF57701">
    <property type="entry name" value="Zn2/Cys6 DNA-binding domain"/>
    <property type="match status" value="1"/>
</dbReference>
<dbReference type="PROSITE" id="PS00463">
    <property type="entry name" value="ZN2_CY6_FUNGAL_1"/>
    <property type="match status" value="1"/>
</dbReference>
<dbReference type="PROSITE" id="PS50048">
    <property type="entry name" value="ZN2_CY6_FUNGAL_2"/>
    <property type="match status" value="1"/>
</dbReference>
<accession>G2TRT1</accession>
<gene>
    <name type="ORF">SPBC1348.12</name>
</gene>
<keyword id="KW-0238">DNA-binding</keyword>
<keyword id="KW-0479">Metal-binding</keyword>
<keyword id="KW-0539">Nucleus</keyword>
<keyword id="KW-1185">Reference proteome</keyword>
<keyword id="KW-0804">Transcription</keyword>
<keyword id="KW-0805">Transcription regulation</keyword>
<keyword id="KW-0862">Zinc</keyword>
<proteinExistence type="inferred from homology"/>
<organism>
    <name type="scientific">Schizosaccharomyces pombe (strain 972 / ATCC 24843)</name>
    <name type="common">Fission yeast</name>
    <dbReference type="NCBI Taxonomy" id="284812"/>
    <lineage>
        <taxon>Eukaryota</taxon>
        <taxon>Fungi</taxon>
        <taxon>Dikarya</taxon>
        <taxon>Ascomycota</taxon>
        <taxon>Taphrinomycotina</taxon>
        <taxon>Schizosaccharomycetes</taxon>
        <taxon>Schizosaccharomycetales</taxon>
        <taxon>Schizosaccharomycetaceae</taxon>
        <taxon>Schizosaccharomyces</taxon>
    </lineage>
</organism>
<sequence length="383" mass="44387">MHLSKASFLFDCSRFILNFHERCLKNGVRTKKACVICRSKKQKCDGQLPCLYCKKYEYQCAYEGQATSTCNSEASLFNDANFKIGSDYRSKRIKVVSDTNNNKEDGDGKLSFTQCNPRMDIHHEAENFTAMVPYYEPKKFRFFYENSAIVFPRIYVFIYFEEVHPIFSMFDQKAMEKKIQFLWDNKSTDSCSEYVVISVKGKLVEHITQVLESSLSTTILSSIQLTVCWVLRTIYLHATTRPHLSWIASSVSMHYAEIVGLHQEITAEYGTRGIELTNITTQMVEEDGPAYQLVLLFKIIMEYQIISEDSRFVYLQAFQRLDQLCDIHSPALVLLKATVCFHLYRNLFLARIKPFCVIVSILFSVIDRALESCKQLVSQRKAW</sequence>
<comment type="function">
    <text evidence="1">Probable transcriptional repressor of multidrug resistance genes.</text>
</comment>
<comment type="subcellular location">
    <subcellularLocation>
        <location evidence="2">Nucleus</location>
    </subcellularLocation>
</comment>
<protein>
    <recommendedName>
        <fullName>Probable transcriptional repressor C1348.12</fullName>
    </recommendedName>
</protein>
<name>YI4C_SCHPO</name>